<name>RL40_METMJ</name>
<proteinExistence type="inferred from homology"/>
<gene>
    <name evidence="1" type="primary">rpl40e</name>
    <name type="ordered locus">Memar_2249</name>
</gene>
<dbReference type="EMBL" id="CP000562">
    <property type="protein sequence ID" value="ABN58172.1"/>
    <property type="molecule type" value="Genomic_DNA"/>
</dbReference>
<dbReference type="RefSeq" id="WP_011845081.1">
    <property type="nucleotide sequence ID" value="NC_009051.1"/>
</dbReference>
<dbReference type="SMR" id="A3CXS2"/>
<dbReference type="STRING" id="368407.Memar_2249"/>
<dbReference type="GeneID" id="4848433"/>
<dbReference type="KEGG" id="mem:Memar_2249"/>
<dbReference type="eggNOG" id="arCOG04049">
    <property type="taxonomic scope" value="Archaea"/>
</dbReference>
<dbReference type="HOGENOM" id="CLU_205640_0_0_2"/>
<dbReference type="OrthoDB" id="45138at2157"/>
<dbReference type="Proteomes" id="UP000002146">
    <property type="component" value="Chromosome"/>
</dbReference>
<dbReference type="GO" id="GO:1990904">
    <property type="term" value="C:ribonucleoprotein complex"/>
    <property type="evidence" value="ECO:0007669"/>
    <property type="project" value="UniProtKB-KW"/>
</dbReference>
<dbReference type="GO" id="GO:0005840">
    <property type="term" value="C:ribosome"/>
    <property type="evidence" value="ECO:0007669"/>
    <property type="project" value="UniProtKB-KW"/>
</dbReference>
<dbReference type="GO" id="GO:0003735">
    <property type="term" value="F:structural constituent of ribosome"/>
    <property type="evidence" value="ECO:0007669"/>
    <property type="project" value="InterPro"/>
</dbReference>
<dbReference type="GO" id="GO:0006412">
    <property type="term" value="P:translation"/>
    <property type="evidence" value="ECO:0007669"/>
    <property type="project" value="UniProtKB-UniRule"/>
</dbReference>
<dbReference type="Gene3D" id="4.10.1060.50">
    <property type="match status" value="1"/>
</dbReference>
<dbReference type="HAMAP" id="MF_00788">
    <property type="entry name" value="Ribosomal_eL40"/>
    <property type="match status" value="1"/>
</dbReference>
<dbReference type="InterPro" id="IPR023657">
    <property type="entry name" value="Ribosomal_eL40_arc"/>
</dbReference>
<dbReference type="InterPro" id="IPR001975">
    <property type="entry name" value="Ribosomal_eL40_dom"/>
</dbReference>
<dbReference type="InterPro" id="IPR038587">
    <property type="entry name" value="Ribosomal_eL40_sf"/>
</dbReference>
<dbReference type="InterPro" id="IPR011332">
    <property type="entry name" value="Ribosomal_zn-bd"/>
</dbReference>
<dbReference type="NCBIfam" id="NF003161">
    <property type="entry name" value="PRK04136.1"/>
    <property type="match status" value="1"/>
</dbReference>
<dbReference type="PANTHER" id="PTHR39649">
    <property type="entry name" value="50S RIBOSOMAL PROTEIN L40E"/>
    <property type="match status" value="1"/>
</dbReference>
<dbReference type="PANTHER" id="PTHR39649:SF1">
    <property type="entry name" value="LARGE RIBOSOMAL SUBUNIT PROTEIN EL40"/>
    <property type="match status" value="1"/>
</dbReference>
<dbReference type="Pfam" id="PF01020">
    <property type="entry name" value="Ribosomal_L40e"/>
    <property type="match status" value="1"/>
</dbReference>
<dbReference type="SMART" id="SM01377">
    <property type="entry name" value="Ribosomal_L40e"/>
    <property type="match status" value="1"/>
</dbReference>
<dbReference type="SUPFAM" id="SSF57829">
    <property type="entry name" value="Zn-binding ribosomal proteins"/>
    <property type="match status" value="1"/>
</dbReference>
<feature type="chain" id="PRO_1000046886" description="Large ribosomal subunit protein eL40">
    <location>
        <begin position="1"/>
        <end position="48"/>
    </location>
</feature>
<accession>A3CXS2</accession>
<protein>
    <recommendedName>
        <fullName evidence="1">Large ribosomal subunit protein eL40</fullName>
    </recommendedName>
    <alternativeName>
        <fullName evidence="2">50S ribosomal protein L40e</fullName>
    </alternativeName>
</protein>
<reference key="1">
    <citation type="journal article" date="2009" name="Stand. Genomic Sci.">
        <title>Complete genome sequence of Methanoculleus marisnigri Romesser et al. 1981 type strain JR1.</title>
        <authorList>
            <person name="Anderson I.J."/>
            <person name="Sieprawska-Lupa M."/>
            <person name="Lapidus A."/>
            <person name="Nolan M."/>
            <person name="Copeland A."/>
            <person name="Glavina Del Rio T."/>
            <person name="Tice H."/>
            <person name="Dalin E."/>
            <person name="Barry K."/>
            <person name="Saunders E."/>
            <person name="Han C."/>
            <person name="Brettin T."/>
            <person name="Detter J.C."/>
            <person name="Bruce D."/>
            <person name="Mikhailova N."/>
            <person name="Pitluck S."/>
            <person name="Hauser L."/>
            <person name="Land M."/>
            <person name="Lucas S."/>
            <person name="Richardson P."/>
            <person name="Whitman W.B."/>
            <person name="Kyrpides N.C."/>
        </authorList>
    </citation>
    <scope>NUCLEOTIDE SEQUENCE [LARGE SCALE GENOMIC DNA]</scope>
    <source>
        <strain>ATCC 35101 / DSM 1498 / JR1</strain>
    </source>
</reference>
<organism>
    <name type="scientific">Methanoculleus marisnigri (strain ATCC 35101 / DSM 1498 / JR1)</name>
    <dbReference type="NCBI Taxonomy" id="368407"/>
    <lineage>
        <taxon>Archaea</taxon>
        <taxon>Methanobacteriati</taxon>
        <taxon>Methanobacteriota</taxon>
        <taxon>Stenosarchaea group</taxon>
        <taxon>Methanomicrobia</taxon>
        <taxon>Methanomicrobiales</taxon>
        <taxon>Methanomicrobiaceae</taxon>
        <taxon>Methanoculleus</taxon>
    </lineage>
</organism>
<evidence type="ECO:0000255" key="1">
    <source>
        <dbReference type="HAMAP-Rule" id="MF_00788"/>
    </source>
</evidence>
<evidence type="ECO:0000305" key="2"/>
<comment type="similarity">
    <text evidence="1">Belongs to the eukaryotic ribosomal protein eL40 family.</text>
</comment>
<sequence>MARFPEAEARLLNVKICMKCNARNAIRATSCRKCGSDELRAKSKERKA</sequence>
<keyword id="KW-0687">Ribonucleoprotein</keyword>
<keyword id="KW-0689">Ribosomal protein</keyword>